<comment type="subcellular location">
    <subcellularLocation>
        <location evidence="2">Cell membrane</location>
        <topology evidence="2">Lipid-anchor</topology>
        <topology evidence="2">GPI-anchor</topology>
    </subcellularLocation>
</comment>
<reference key="1">
    <citation type="journal article" date="2002" name="Nature">
        <title>The genome sequence of Schizosaccharomyces pombe.</title>
        <authorList>
            <person name="Wood V."/>
            <person name="Gwilliam R."/>
            <person name="Rajandream M.A."/>
            <person name="Lyne M.H."/>
            <person name="Lyne R."/>
            <person name="Stewart A."/>
            <person name="Sgouros J.G."/>
            <person name="Peat N."/>
            <person name="Hayles J."/>
            <person name="Baker S.G."/>
            <person name="Basham D."/>
            <person name="Bowman S."/>
            <person name="Brooks K."/>
            <person name="Brown D."/>
            <person name="Brown S."/>
            <person name="Chillingworth T."/>
            <person name="Churcher C.M."/>
            <person name="Collins M."/>
            <person name="Connor R."/>
            <person name="Cronin A."/>
            <person name="Davis P."/>
            <person name="Feltwell T."/>
            <person name="Fraser A."/>
            <person name="Gentles S."/>
            <person name="Goble A."/>
            <person name="Hamlin N."/>
            <person name="Harris D.E."/>
            <person name="Hidalgo J."/>
            <person name="Hodgson G."/>
            <person name="Holroyd S."/>
            <person name="Hornsby T."/>
            <person name="Howarth S."/>
            <person name="Huckle E.J."/>
            <person name="Hunt S."/>
            <person name="Jagels K."/>
            <person name="James K.D."/>
            <person name="Jones L."/>
            <person name="Jones M."/>
            <person name="Leather S."/>
            <person name="McDonald S."/>
            <person name="McLean J."/>
            <person name="Mooney P."/>
            <person name="Moule S."/>
            <person name="Mungall K.L."/>
            <person name="Murphy L.D."/>
            <person name="Niblett D."/>
            <person name="Odell C."/>
            <person name="Oliver K."/>
            <person name="O'Neil S."/>
            <person name="Pearson D."/>
            <person name="Quail M.A."/>
            <person name="Rabbinowitsch E."/>
            <person name="Rutherford K.M."/>
            <person name="Rutter S."/>
            <person name="Saunders D."/>
            <person name="Seeger K."/>
            <person name="Sharp S."/>
            <person name="Skelton J."/>
            <person name="Simmonds M.N."/>
            <person name="Squares R."/>
            <person name="Squares S."/>
            <person name="Stevens K."/>
            <person name="Taylor K."/>
            <person name="Taylor R.G."/>
            <person name="Tivey A."/>
            <person name="Walsh S.V."/>
            <person name="Warren T."/>
            <person name="Whitehead S."/>
            <person name="Woodward J.R."/>
            <person name="Volckaert G."/>
            <person name="Aert R."/>
            <person name="Robben J."/>
            <person name="Grymonprez B."/>
            <person name="Weltjens I."/>
            <person name="Vanstreels E."/>
            <person name="Rieger M."/>
            <person name="Schaefer M."/>
            <person name="Mueller-Auer S."/>
            <person name="Gabel C."/>
            <person name="Fuchs M."/>
            <person name="Duesterhoeft A."/>
            <person name="Fritzc C."/>
            <person name="Holzer E."/>
            <person name="Moestl D."/>
            <person name="Hilbert H."/>
            <person name="Borzym K."/>
            <person name="Langer I."/>
            <person name="Beck A."/>
            <person name="Lehrach H."/>
            <person name="Reinhardt R."/>
            <person name="Pohl T.M."/>
            <person name="Eger P."/>
            <person name="Zimmermann W."/>
            <person name="Wedler H."/>
            <person name="Wambutt R."/>
            <person name="Purnelle B."/>
            <person name="Goffeau A."/>
            <person name="Cadieu E."/>
            <person name="Dreano S."/>
            <person name="Gloux S."/>
            <person name="Lelaure V."/>
            <person name="Mottier S."/>
            <person name="Galibert F."/>
            <person name="Aves S.J."/>
            <person name="Xiang Z."/>
            <person name="Hunt C."/>
            <person name="Moore K."/>
            <person name="Hurst S.M."/>
            <person name="Lucas M."/>
            <person name="Rochet M."/>
            <person name="Gaillardin C."/>
            <person name="Tallada V.A."/>
            <person name="Garzon A."/>
            <person name="Thode G."/>
            <person name="Daga R.R."/>
            <person name="Cruzado L."/>
            <person name="Jimenez J."/>
            <person name="Sanchez M."/>
            <person name="del Rey F."/>
            <person name="Benito J."/>
            <person name="Dominguez A."/>
            <person name="Revuelta J.L."/>
            <person name="Moreno S."/>
            <person name="Armstrong J."/>
            <person name="Forsburg S.L."/>
            <person name="Cerutti L."/>
            <person name="Lowe T."/>
            <person name="McCombie W.R."/>
            <person name="Paulsen I."/>
            <person name="Potashkin J."/>
            <person name="Shpakovski G.V."/>
            <person name="Ussery D."/>
            <person name="Barrell B.G."/>
            <person name="Nurse P."/>
        </authorList>
    </citation>
    <scope>NUCLEOTIDE SEQUENCE [LARGE SCALE GENOMIC DNA]</scope>
    <source>
        <strain>972 / ATCC 24843</strain>
    </source>
</reference>
<dbReference type="EMBL" id="CU329672">
    <property type="protein sequence ID" value="CAB76215.1"/>
    <property type="molecule type" value="Genomic_DNA"/>
</dbReference>
<dbReference type="PIR" id="T50413">
    <property type="entry name" value="T50413"/>
</dbReference>
<dbReference type="RefSeq" id="NP_588009.1">
    <property type="nucleotide sequence ID" value="NM_001023000.2"/>
</dbReference>
<dbReference type="PaxDb" id="4896-SPCC24B10.06.1"/>
<dbReference type="EnsemblFungi" id="SPCC24B10.06.1">
    <property type="protein sequence ID" value="SPCC24B10.06.1:pep"/>
    <property type="gene ID" value="SPCC24B10.06"/>
</dbReference>
<dbReference type="KEGG" id="spo:2539230"/>
<dbReference type="PomBase" id="SPCC24B10.06"/>
<dbReference type="VEuPathDB" id="FungiDB:SPCC24B10.06"/>
<dbReference type="HOGENOM" id="CLU_1670408_0_0_1"/>
<dbReference type="InParanoid" id="Q9P7J9"/>
<dbReference type="OMA" id="LMYTERV"/>
<dbReference type="PRO" id="PR:Q9P7J9"/>
<dbReference type="Proteomes" id="UP000002485">
    <property type="component" value="Chromosome III"/>
</dbReference>
<dbReference type="GO" id="GO:0005783">
    <property type="term" value="C:endoplasmic reticulum"/>
    <property type="evidence" value="ECO:0007005"/>
    <property type="project" value="PomBase"/>
</dbReference>
<dbReference type="GO" id="GO:0009897">
    <property type="term" value="C:external side of plasma membrane"/>
    <property type="evidence" value="ECO:0000304"/>
    <property type="project" value="PomBase"/>
</dbReference>
<gene>
    <name type="ORF">SPCC24B10.06</name>
</gene>
<proteinExistence type="inferred from homology"/>
<feature type="signal peptide" evidence="1">
    <location>
        <begin position="1"/>
        <end position="22"/>
    </location>
</feature>
<feature type="chain" id="PRO_0000373868" description="Uncharacterized protein C24B10.06">
    <location>
        <begin position="23"/>
        <end position="129"/>
    </location>
</feature>
<feature type="propeptide" id="PRO_0000373869" description="Removed in mature form" evidence="1">
    <location>
        <begin position="130"/>
        <end position="156"/>
    </location>
</feature>
<feature type="lipid moiety-binding region" description="GPI-anchor amidated serine" evidence="1">
    <location>
        <position position="129"/>
    </location>
</feature>
<evidence type="ECO:0000255" key="1"/>
<evidence type="ECO:0000305" key="2"/>
<keyword id="KW-1003">Cell membrane</keyword>
<keyword id="KW-0325">Glycoprotein</keyword>
<keyword id="KW-0336">GPI-anchor</keyword>
<keyword id="KW-0449">Lipoprotein</keyword>
<keyword id="KW-0472">Membrane</keyword>
<keyword id="KW-1185">Reference proteome</keyword>
<keyword id="KW-0732">Signal</keyword>
<protein>
    <recommendedName>
        <fullName>Uncharacterized protein C24B10.06</fullName>
    </recommendedName>
</protein>
<sequence>MFGKVSSLLVFASFLIIQGAFATLVAPIGDLEHLSEIELLYTNRVLPSKIPLTPFVKRDDDSSSTQASYSTTVSDVVIVTDKSWSDGVETIFPYSYTEYQPSTTYTSAPAGSIGYAASIPNTGRELMESGSPVRFSKSSLLIVSLLSIAAFAALVL</sequence>
<accession>Q9P7J9</accession>
<name>YJN6_SCHPO</name>
<organism>
    <name type="scientific">Schizosaccharomyces pombe (strain 972 / ATCC 24843)</name>
    <name type="common">Fission yeast</name>
    <dbReference type="NCBI Taxonomy" id="284812"/>
    <lineage>
        <taxon>Eukaryota</taxon>
        <taxon>Fungi</taxon>
        <taxon>Dikarya</taxon>
        <taxon>Ascomycota</taxon>
        <taxon>Taphrinomycotina</taxon>
        <taxon>Schizosaccharomycetes</taxon>
        <taxon>Schizosaccharomycetales</taxon>
        <taxon>Schizosaccharomycetaceae</taxon>
        <taxon>Schizosaccharomyces</taxon>
    </lineage>
</organism>